<protein>
    <recommendedName>
        <fullName evidence="5">Large ribosomal subunit protein uL2</fullName>
    </recommendedName>
    <alternativeName>
        <fullName>50S ribosomal protein L2</fullName>
    </alternativeName>
</protein>
<gene>
    <name type="primary">rplB</name>
    <name type="ordered locus">TTHA1689</name>
</gene>
<evidence type="ECO:0000250" key="1"/>
<evidence type="ECO:0000256" key="2">
    <source>
        <dbReference type="SAM" id="MobiDB-lite"/>
    </source>
</evidence>
<evidence type="ECO:0000269" key="3">
    <source>
    </source>
</evidence>
<evidence type="ECO:0000269" key="4">
    <source>
    </source>
</evidence>
<evidence type="ECO:0000305" key="5"/>
<evidence type="ECO:0007829" key="6">
    <source>
        <dbReference type="PDB" id="4WT8"/>
    </source>
</evidence>
<proteinExistence type="evidence at protein level"/>
<comment type="function">
    <text evidence="1">One of the primary rRNA binding proteins. Required for association of the 30S and 50S subunits to form the 70S ribosome, for tRNA binding and peptide bond formation. It has been suggested to have peptidyltransferase activity; this is somewhat controversial (By similarity). Makes several contacts with the 16S rRNA (forming bridge B7b) in the 70S ribosome.</text>
</comment>
<comment type="subunit">
    <text>Part of the 50S ribosomal subunit. Forms a bridge to the 30S subunit in the 70S ribosome, contacting the 16S rRNA. May also make transient contacts with protein S6 during translation in the 70S ribosome.</text>
</comment>
<comment type="mass spectrometry" mass="30337.0" method="MALDI" evidence="4"/>
<comment type="similarity">
    <text evidence="5">Belongs to the universal ribosomal protein uL2 family.</text>
</comment>
<sequence length="276" mass="30468">MAVKKFKPYTPSRRFMTVADFSEITKTEPEKSLVKPLKKTGGRNNQGRITVRFRGGGHKRLYRIIDFKRWDKVGIPAKVAAIEYDPNRSARIALLHYVDGEKRYIIAPDGLQVGQQVVAGPDAPIQVGNALPLRFIPVGTVVHAVELEPKKGAKLARAAGTSAQIQGREGDYVILRLPSGELRKVHGECYATVGAVGNADHKNIVLGKAGRSRWLGRRPHVRGAAMNPVDHPHGGGEGRAPRGRPPASPWGWQTKGLKTRKRRKPSSRFIIARRKK</sequence>
<dbReference type="EMBL" id="AP008226">
    <property type="protein sequence ID" value="BAD71512.1"/>
    <property type="molecule type" value="Genomic_DNA"/>
</dbReference>
<dbReference type="RefSeq" id="WP_011173712.1">
    <property type="nucleotide sequence ID" value="NC_006461.1"/>
</dbReference>
<dbReference type="RefSeq" id="YP_144955.1">
    <property type="nucleotide sequence ID" value="NC_006461.1"/>
</dbReference>
<dbReference type="PDB" id="1VVJ">
    <property type="method" value="X-ray"/>
    <property type="resolution" value="3.44 A"/>
    <property type="chains" value="RD/YD=1-276"/>
</dbReference>
<dbReference type="PDB" id="1VY4">
    <property type="method" value="X-ray"/>
    <property type="resolution" value="2.60 A"/>
    <property type="chains" value="BD/DD=1-276"/>
</dbReference>
<dbReference type="PDB" id="1VY5">
    <property type="method" value="X-ray"/>
    <property type="resolution" value="2.55 A"/>
    <property type="chains" value="BD/DD=1-276"/>
</dbReference>
<dbReference type="PDB" id="1VY6">
    <property type="method" value="X-ray"/>
    <property type="resolution" value="2.90 A"/>
    <property type="chains" value="BD/DD=1-276"/>
</dbReference>
<dbReference type="PDB" id="1VY7">
    <property type="method" value="X-ray"/>
    <property type="resolution" value="2.80 A"/>
    <property type="chains" value="BD/DD=1-276"/>
</dbReference>
<dbReference type="PDB" id="4L47">
    <property type="method" value="X-ray"/>
    <property type="resolution" value="3.22 A"/>
    <property type="chains" value="RD/YD=1-276"/>
</dbReference>
<dbReference type="PDB" id="4L71">
    <property type="method" value="X-ray"/>
    <property type="resolution" value="3.90 A"/>
    <property type="chains" value="RD/YD=1-276"/>
</dbReference>
<dbReference type="PDB" id="4LEL">
    <property type="method" value="X-ray"/>
    <property type="resolution" value="3.90 A"/>
    <property type="chains" value="RD/YD=1-276"/>
</dbReference>
<dbReference type="PDB" id="4LFZ">
    <property type="method" value="X-ray"/>
    <property type="resolution" value="3.92 A"/>
    <property type="chains" value="RD/YD=1-276"/>
</dbReference>
<dbReference type="PDB" id="4LNT">
    <property type="method" value="X-ray"/>
    <property type="resolution" value="2.94 A"/>
    <property type="chains" value="RD/YD=1-276"/>
</dbReference>
<dbReference type="PDB" id="4LSK">
    <property type="method" value="X-ray"/>
    <property type="resolution" value="3.48 A"/>
    <property type="chains" value="RD/YD=1-276"/>
</dbReference>
<dbReference type="PDB" id="4LT8">
    <property type="method" value="X-ray"/>
    <property type="resolution" value="3.14 A"/>
    <property type="chains" value="RD/YD=1-276"/>
</dbReference>
<dbReference type="PDB" id="4P6F">
    <property type="method" value="X-ray"/>
    <property type="resolution" value="3.60 A"/>
    <property type="chains" value="RD/YD=1-276"/>
</dbReference>
<dbReference type="PDB" id="4P70">
    <property type="method" value="X-ray"/>
    <property type="resolution" value="3.68 A"/>
    <property type="chains" value="RD/YD=1-276"/>
</dbReference>
<dbReference type="PDB" id="4TUA">
    <property type="method" value="X-ray"/>
    <property type="resolution" value="3.60 A"/>
    <property type="chains" value="RD/YD=1-276"/>
</dbReference>
<dbReference type="PDB" id="4TUB">
    <property type="method" value="X-ray"/>
    <property type="resolution" value="3.60 A"/>
    <property type="chains" value="RD/YD=1-276"/>
</dbReference>
<dbReference type="PDB" id="4TUC">
    <property type="method" value="X-ray"/>
    <property type="resolution" value="3.60 A"/>
    <property type="chains" value="RD/YD=1-276"/>
</dbReference>
<dbReference type="PDB" id="4TUD">
    <property type="method" value="X-ray"/>
    <property type="resolution" value="3.60 A"/>
    <property type="chains" value="RD/YD=1-276"/>
</dbReference>
<dbReference type="PDB" id="4TUE">
    <property type="method" value="X-ray"/>
    <property type="resolution" value="3.50 A"/>
    <property type="chains" value="RD/YD=1-276"/>
</dbReference>
<dbReference type="PDB" id="4V42">
    <property type="method" value="X-ray"/>
    <property type="resolution" value="5.50 A"/>
    <property type="chains" value="BD=62-234"/>
</dbReference>
<dbReference type="PDB" id="4V4P">
    <property type="method" value="X-ray"/>
    <property type="resolution" value="5.50 A"/>
    <property type="chains" value="AD=62-234"/>
</dbReference>
<dbReference type="PDB" id="4V4X">
    <property type="method" value="X-ray"/>
    <property type="resolution" value="5.00 A"/>
    <property type="chains" value="BD=1-276"/>
</dbReference>
<dbReference type="PDB" id="4V4Y">
    <property type="method" value="X-ray"/>
    <property type="resolution" value="5.50 A"/>
    <property type="chains" value="BD=1-276"/>
</dbReference>
<dbReference type="PDB" id="4V4Z">
    <property type="method" value="X-ray"/>
    <property type="resolution" value="4.51 A"/>
    <property type="chains" value="BD=1-276"/>
</dbReference>
<dbReference type="PDB" id="4V51">
    <property type="method" value="X-ray"/>
    <property type="resolution" value="2.80 A"/>
    <property type="chains" value="BD/DD=2-276"/>
</dbReference>
<dbReference type="PDB" id="4V5A">
    <property type="method" value="X-ray"/>
    <property type="resolution" value="3.50 A"/>
    <property type="chains" value="BD/DD=2-276"/>
</dbReference>
<dbReference type="PDB" id="4V5C">
    <property type="method" value="X-ray"/>
    <property type="resolution" value="3.30 A"/>
    <property type="chains" value="BD/DD=1-276"/>
</dbReference>
<dbReference type="PDB" id="4V5D">
    <property type="method" value="X-ray"/>
    <property type="resolution" value="3.50 A"/>
    <property type="chains" value="BD/DD=1-276"/>
</dbReference>
<dbReference type="PDB" id="4V5E">
    <property type="method" value="X-ray"/>
    <property type="resolution" value="3.45 A"/>
    <property type="chains" value="BD/DD=1-276"/>
</dbReference>
<dbReference type="PDB" id="4V5F">
    <property type="method" value="X-ray"/>
    <property type="resolution" value="3.60 A"/>
    <property type="chains" value="BD/DD=1-276"/>
</dbReference>
<dbReference type="PDB" id="4V5G">
    <property type="method" value="X-ray"/>
    <property type="resolution" value="3.60 A"/>
    <property type="chains" value="BD/DD=1-276"/>
</dbReference>
<dbReference type="PDB" id="4V5J">
    <property type="method" value="X-ray"/>
    <property type="resolution" value="3.10 A"/>
    <property type="chains" value="BD/DD=1-276"/>
</dbReference>
<dbReference type="PDB" id="4V5K">
    <property type="method" value="X-ray"/>
    <property type="resolution" value="3.20 A"/>
    <property type="chains" value="BD/DD=1-276"/>
</dbReference>
<dbReference type="PDB" id="4V5L">
    <property type="method" value="X-ray"/>
    <property type="resolution" value="3.10 A"/>
    <property type="chains" value="BD=1-276"/>
</dbReference>
<dbReference type="PDB" id="4V5M">
    <property type="method" value="EM"/>
    <property type="resolution" value="7.80 A"/>
    <property type="chains" value="BD=1-276"/>
</dbReference>
<dbReference type="PDB" id="4V5N">
    <property type="method" value="EM"/>
    <property type="resolution" value="7.60 A"/>
    <property type="chains" value="BD=1-276"/>
</dbReference>
<dbReference type="PDB" id="4V5P">
    <property type="method" value="X-ray"/>
    <property type="resolution" value="3.10 A"/>
    <property type="chains" value="BD/DD=1-276"/>
</dbReference>
<dbReference type="PDB" id="4V5Q">
    <property type="method" value="X-ray"/>
    <property type="resolution" value="3.10 A"/>
    <property type="chains" value="BD/DD=1-276"/>
</dbReference>
<dbReference type="PDB" id="4V5R">
    <property type="method" value="X-ray"/>
    <property type="resolution" value="3.10 A"/>
    <property type="chains" value="BD/DD=1-276"/>
</dbReference>
<dbReference type="PDB" id="4V5S">
    <property type="method" value="X-ray"/>
    <property type="resolution" value="3.10 A"/>
    <property type="chains" value="BD/DD=1-276"/>
</dbReference>
<dbReference type="PDB" id="4V68">
    <property type="method" value="EM"/>
    <property type="resolution" value="6.40 A"/>
    <property type="chains" value="BD=2-273"/>
</dbReference>
<dbReference type="PDB" id="4V6A">
    <property type="method" value="X-ray"/>
    <property type="resolution" value="3.10 A"/>
    <property type="chains" value="BD/DD=1-276"/>
</dbReference>
<dbReference type="PDB" id="4V6F">
    <property type="method" value="X-ray"/>
    <property type="resolution" value="3.10 A"/>
    <property type="chains" value="AD/DD=1-276"/>
</dbReference>
<dbReference type="PDB" id="4V6G">
    <property type="method" value="X-ray"/>
    <property type="resolution" value="3.50 A"/>
    <property type="chains" value="BD/DD=1-276"/>
</dbReference>
<dbReference type="PDB" id="4V7J">
    <property type="method" value="X-ray"/>
    <property type="resolution" value="3.30 A"/>
    <property type="chains" value="AD/BD=1-276"/>
</dbReference>
<dbReference type="PDB" id="4V7K">
    <property type="method" value="X-ray"/>
    <property type="resolution" value="3.60 A"/>
    <property type="chains" value="AD/BD=1-276"/>
</dbReference>
<dbReference type="PDB" id="4V7L">
    <property type="method" value="X-ray"/>
    <property type="resolution" value="3.00 A"/>
    <property type="chains" value="BD/DD=1-276"/>
</dbReference>
<dbReference type="PDB" id="4V7M">
    <property type="method" value="X-ray"/>
    <property type="resolution" value="3.45 A"/>
    <property type="chains" value="BD/DD=1-276"/>
</dbReference>
<dbReference type="PDB" id="4V7W">
    <property type="method" value="X-ray"/>
    <property type="resolution" value="3.00 A"/>
    <property type="chains" value="BD/DD=1-276"/>
</dbReference>
<dbReference type="PDB" id="4V7X">
    <property type="method" value="X-ray"/>
    <property type="resolution" value="3.00 A"/>
    <property type="chains" value="BD/DD=1-276"/>
</dbReference>
<dbReference type="PDB" id="4V7Y">
    <property type="method" value="X-ray"/>
    <property type="resolution" value="3.00 A"/>
    <property type="chains" value="BD/DD=1-276"/>
</dbReference>
<dbReference type="PDB" id="4V7Z">
    <property type="method" value="X-ray"/>
    <property type="resolution" value="3.10 A"/>
    <property type="chains" value="BD/DD=1-276"/>
</dbReference>
<dbReference type="PDB" id="4V87">
    <property type="method" value="X-ray"/>
    <property type="resolution" value="3.10 A"/>
    <property type="chains" value="AD/DD=2-273"/>
</dbReference>
<dbReference type="PDB" id="4V8A">
    <property type="method" value="X-ray"/>
    <property type="resolution" value="3.20 A"/>
    <property type="chains" value="AD/BD=1-276"/>
</dbReference>
<dbReference type="PDB" id="4V8B">
    <property type="method" value="X-ray"/>
    <property type="resolution" value="3.00 A"/>
    <property type="chains" value="BD/DD=1-276"/>
</dbReference>
<dbReference type="PDB" id="4V8C">
    <property type="method" value="X-ray"/>
    <property type="resolution" value="3.30 A"/>
    <property type="chains" value="AD/BD=1-276"/>
</dbReference>
<dbReference type="PDB" id="4V8D">
    <property type="method" value="X-ray"/>
    <property type="resolution" value="3.00 A"/>
    <property type="chains" value="BD/DD=1-276"/>
</dbReference>
<dbReference type="PDB" id="4V8E">
    <property type="method" value="X-ray"/>
    <property type="resolution" value="3.30 A"/>
    <property type="chains" value="AD/CD=1-276"/>
</dbReference>
<dbReference type="PDB" id="4V8F">
    <property type="method" value="X-ray"/>
    <property type="resolution" value="3.30 A"/>
    <property type="chains" value="AD/DD=1-276"/>
</dbReference>
<dbReference type="PDB" id="4V8G">
    <property type="method" value="X-ray"/>
    <property type="resolution" value="3.00 A"/>
    <property type="chains" value="BD/DD=1-276"/>
</dbReference>
<dbReference type="PDB" id="4V8H">
    <property type="method" value="X-ray"/>
    <property type="resolution" value="3.10 A"/>
    <property type="chains" value="BD/DD=1-276"/>
</dbReference>
<dbReference type="PDB" id="4V8I">
    <property type="method" value="X-ray"/>
    <property type="resolution" value="2.70 A"/>
    <property type="chains" value="BD/DD=1-276"/>
</dbReference>
<dbReference type="PDB" id="4V8J">
    <property type="method" value="X-ray"/>
    <property type="resolution" value="3.90 A"/>
    <property type="chains" value="BD/DD=1-276"/>
</dbReference>
<dbReference type="PDB" id="4V8N">
    <property type="method" value="X-ray"/>
    <property type="resolution" value="3.10 A"/>
    <property type="chains" value="BD/DD=1-276"/>
</dbReference>
<dbReference type="PDB" id="4V8O">
    <property type="method" value="X-ray"/>
    <property type="resolution" value="3.80 A"/>
    <property type="chains" value="BD=1-276"/>
</dbReference>
<dbReference type="PDB" id="4V8Q">
    <property type="method" value="X-ray"/>
    <property type="resolution" value="3.10 A"/>
    <property type="chains" value="AD=1-276"/>
</dbReference>
<dbReference type="PDB" id="4V8U">
    <property type="method" value="X-ray"/>
    <property type="resolution" value="3.70 A"/>
    <property type="chains" value="BD/DD=1-276"/>
</dbReference>
<dbReference type="PDB" id="4V8X">
    <property type="method" value="X-ray"/>
    <property type="resolution" value="3.35 A"/>
    <property type="chains" value="BD/DD=1-276"/>
</dbReference>
<dbReference type="PDB" id="4V90">
    <property type="method" value="X-ray"/>
    <property type="resolution" value="2.95 A"/>
    <property type="chains" value="BD=2-276"/>
</dbReference>
<dbReference type="PDB" id="4V95">
    <property type="method" value="X-ray"/>
    <property type="resolution" value="3.20 A"/>
    <property type="chains" value="BD/DD=1-276"/>
</dbReference>
<dbReference type="PDB" id="4V97">
    <property type="method" value="X-ray"/>
    <property type="resolution" value="3.52 A"/>
    <property type="chains" value="BD/DD=1-276"/>
</dbReference>
<dbReference type="PDB" id="4V9A">
    <property type="method" value="X-ray"/>
    <property type="resolution" value="3.30 A"/>
    <property type="chains" value="BD/DD=1-276"/>
</dbReference>
<dbReference type="PDB" id="4V9B">
    <property type="method" value="X-ray"/>
    <property type="resolution" value="3.10 A"/>
    <property type="chains" value="BD/DD=1-276"/>
</dbReference>
<dbReference type="PDB" id="4V9H">
    <property type="method" value="X-ray"/>
    <property type="resolution" value="2.86 A"/>
    <property type="chains" value="BD=1-276"/>
</dbReference>
<dbReference type="PDB" id="4V9I">
    <property type="method" value="X-ray"/>
    <property type="resolution" value="3.30 A"/>
    <property type="chains" value="BD/DD=2-272"/>
</dbReference>
<dbReference type="PDB" id="4V9R">
    <property type="method" value="X-ray"/>
    <property type="resolution" value="3.00 A"/>
    <property type="chains" value="BD/DD=1-276"/>
</dbReference>
<dbReference type="PDB" id="4V9S">
    <property type="method" value="X-ray"/>
    <property type="resolution" value="3.10 A"/>
    <property type="chains" value="BD/DD=1-276"/>
</dbReference>
<dbReference type="PDB" id="4W2E">
    <property type="method" value="X-ray"/>
    <property type="resolution" value="2.90 A"/>
    <property type="chains" value="D=1-276"/>
</dbReference>
<dbReference type="PDB" id="4W2F">
    <property type="method" value="X-ray"/>
    <property type="resolution" value="2.40 A"/>
    <property type="chains" value="BD/DD=1-276"/>
</dbReference>
<dbReference type="PDB" id="4W2G">
    <property type="method" value="X-ray"/>
    <property type="resolution" value="2.55 A"/>
    <property type="chains" value="BD/DD=1-276"/>
</dbReference>
<dbReference type="PDB" id="4W2H">
    <property type="method" value="X-ray"/>
    <property type="resolution" value="2.70 A"/>
    <property type="chains" value="BD/DD=1-276"/>
</dbReference>
<dbReference type="PDB" id="4W2I">
    <property type="method" value="X-ray"/>
    <property type="resolution" value="2.70 A"/>
    <property type="chains" value="BD/DD=1-276"/>
</dbReference>
<dbReference type="PDB" id="4W4G">
    <property type="method" value="X-ray"/>
    <property type="resolution" value="3.30 A"/>
    <property type="chains" value="RD/YD=1-276"/>
</dbReference>
<dbReference type="PDB" id="4WPO">
    <property type="method" value="X-ray"/>
    <property type="resolution" value="2.80 A"/>
    <property type="chains" value="AD/CD=1-276"/>
</dbReference>
<dbReference type="PDB" id="4WQ1">
    <property type="method" value="X-ray"/>
    <property type="resolution" value="3.10 A"/>
    <property type="chains" value="11=2-273, 19=1-276"/>
</dbReference>
<dbReference type="PDB" id="4WQF">
    <property type="method" value="X-ray"/>
    <property type="resolution" value="2.80 A"/>
    <property type="chains" value="AD/CD=1-276"/>
</dbReference>
<dbReference type="PDB" id="4WQR">
    <property type="method" value="X-ray"/>
    <property type="resolution" value="3.15 A"/>
    <property type="chains" value="11/19=1-276"/>
</dbReference>
<dbReference type="PDB" id="4WQU">
    <property type="method" value="X-ray"/>
    <property type="resolution" value="2.80 A"/>
    <property type="chains" value="AD/CD=1-276"/>
</dbReference>
<dbReference type="PDB" id="4WQY">
    <property type="method" value="X-ray"/>
    <property type="resolution" value="2.80 A"/>
    <property type="chains" value="AD/CD=1-276"/>
</dbReference>
<dbReference type="PDB" id="4WR6">
    <property type="method" value="X-ray"/>
    <property type="resolution" value="3.05 A"/>
    <property type="chains" value="11/19=1-276"/>
</dbReference>
<dbReference type="PDB" id="4WRA">
    <property type="method" value="X-ray"/>
    <property type="resolution" value="3.05 A"/>
    <property type="chains" value="11/19=1-276"/>
</dbReference>
<dbReference type="PDB" id="4WRO">
    <property type="method" value="X-ray"/>
    <property type="resolution" value="3.05 A"/>
    <property type="chains" value="11=1-276"/>
</dbReference>
<dbReference type="PDB" id="4WSD">
    <property type="method" value="X-ray"/>
    <property type="resolution" value="2.95 A"/>
    <property type="chains" value="11/19=1-276"/>
</dbReference>
<dbReference type="PDB" id="4WSM">
    <property type="method" value="X-ray"/>
    <property type="resolution" value="3.30 A"/>
    <property type="chains" value="11/19=1-276"/>
</dbReference>
<dbReference type="PDB" id="4WT1">
    <property type="method" value="X-ray"/>
    <property type="resolution" value="3.05 A"/>
    <property type="chains" value="11/19=1-276"/>
</dbReference>
<dbReference type="PDB" id="4WT8">
    <property type="method" value="X-ray"/>
    <property type="resolution" value="3.40 A"/>
    <property type="chains" value="CB/DB=2-272"/>
</dbReference>
<dbReference type="PDB" id="4WU1">
    <property type="method" value="X-ray"/>
    <property type="resolution" value="3.20 A"/>
    <property type="chains" value="11/19=1-276"/>
</dbReference>
<dbReference type="PDB" id="4WZD">
    <property type="method" value="X-ray"/>
    <property type="resolution" value="3.10 A"/>
    <property type="chains" value="11/19=1-276"/>
</dbReference>
<dbReference type="PDB" id="4WZO">
    <property type="method" value="X-ray"/>
    <property type="resolution" value="3.30 A"/>
    <property type="chains" value="11/19=1-276"/>
</dbReference>
<dbReference type="PDB" id="4Y4O">
    <property type="method" value="X-ray"/>
    <property type="resolution" value="2.30 A"/>
    <property type="chains" value="1D/2D=1-276"/>
</dbReference>
<dbReference type="PDB" id="4Y4P">
    <property type="method" value="X-ray"/>
    <property type="resolution" value="2.50 A"/>
    <property type="chains" value="1D/2D=1-276"/>
</dbReference>
<dbReference type="PDB" id="4YPB">
    <property type="method" value="X-ray"/>
    <property type="resolution" value="3.40 A"/>
    <property type="chains" value="RD/YD=1-276"/>
</dbReference>
<dbReference type="PDB" id="4YZV">
    <property type="method" value="X-ray"/>
    <property type="resolution" value="3.10 A"/>
    <property type="chains" value="RD/YD=1-276"/>
</dbReference>
<dbReference type="PDB" id="4Z3S">
    <property type="method" value="X-ray"/>
    <property type="resolution" value="2.65 A"/>
    <property type="chains" value="1D/2D=1-276"/>
</dbReference>
<dbReference type="PDB" id="4Z8C">
    <property type="method" value="X-ray"/>
    <property type="resolution" value="2.90 A"/>
    <property type="chains" value="1D/2D=1-276"/>
</dbReference>
<dbReference type="PDB" id="4ZER">
    <property type="method" value="X-ray"/>
    <property type="resolution" value="3.10 A"/>
    <property type="chains" value="1D/2D=2-276"/>
</dbReference>
<dbReference type="PDB" id="4ZSN">
    <property type="method" value="X-ray"/>
    <property type="resolution" value="3.60 A"/>
    <property type="chains" value="RD/YD=1-276"/>
</dbReference>
<dbReference type="PDB" id="5A9Z">
    <property type="method" value="EM"/>
    <property type="resolution" value="4.70 A"/>
    <property type="chains" value="AD=5-276"/>
</dbReference>
<dbReference type="PDB" id="5AA0">
    <property type="method" value="EM"/>
    <property type="resolution" value="5.00 A"/>
    <property type="chains" value="AD=5-276"/>
</dbReference>
<dbReference type="PDB" id="5CZP">
    <property type="method" value="X-ray"/>
    <property type="resolution" value="3.30 A"/>
    <property type="chains" value="RD/YD=1-276"/>
</dbReference>
<dbReference type="PDB" id="5D8B">
    <property type="method" value="X-ray"/>
    <property type="resolution" value="3.63 A"/>
    <property type="chains" value="A/WA=2-272"/>
</dbReference>
<dbReference type="PDB" id="5DFE">
    <property type="method" value="X-ray"/>
    <property type="resolution" value="3.10 A"/>
    <property type="chains" value="RD/YD=1-276"/>
</dbReference>
<dbReference type="PDB" id="5DOX">
    <property type="method" value="X-ray"/>
    <property type="resolution" value="3.10 A"/>
    <property type="chains" value="1D/2D=1-276"/>
</dbReference>
<dbReference type="PDB" id="5DOY">
    <property type="method" value="X-ray"/>
    <property type="resolution" value="2.60 A"/>
    <property type="chains" value="1D/2D=1-276"/>
</dbReference>
<dbReference type="PDB" id="5E7K">
    <property type="method" value="X-ray"/>
    <property type="resolution" value="3.20 A"/>
    <property type="chains" value="11/19=1-276"/>
</dbReference>
<dbReference type="PDB" id="5E81">
    <property type="method" value="X-ray"/>
    <property type="resolution" value="2.95 A"/>
    <property type="chains" value="11/19=1-276"/>
</dbReference>
<dbReference type="PDB" id="5EL4">
    <property type="method" value="X-ray"/>
    <property type="resolution" value="3.15 A"/>
    <property type="chains" value="11/19=1-276"/>
</dbReference>
<dbReference type="PDB" id="5EL5">
    <property type="method" value="X-ray"/>
    <property type="resolution" value="3.15 A"/>
    <property type="chains" value="11/19=1-276"/>
</dbReference>
<dbReference type="PDB" id="5EL6">
    <property type="method" value="X-ray"/>
    <property type="resolution" value="3.10 A"/>
    <property type="chains" value="11/19=1-276"/>
</dbReference>
<dbReference type="PDB" id="5EL7">
    <property type="method" value="X-ray"/>
    <property type="resolution" value="3.15 A"/>
    <property type="chains" value="11/19=1-276"/>
</dbReference>
<dbReference type="PDB" id="5F8K">
    <property type="method" value="X-ray"/>
    <property type="resolution" value="2.80 A"/>
    <property type="chains" value="1D/2D=2-276"/>
</dbReference>
<dbReference type="PDB" id="5FDU">
    <property type="method" value="X-ray"/>
    <property type="resolution" value="2.90 A"/>
    <property type="chains" value="1D/2D=2-276"/>
</dbReference>
<dbReference type="PDB" id="5FDV">
    <property type="method" value="X-ray"/>
    <property type="resolution" value="2.80 A"/>
    <property type="chains" value="1D/2D=2-276"/>
</dbReference>
<dbReference type="PDB" id="5HAU">
    <property type="method" value="X-ray"/>
    <property type="resolution" value="3.00 A"/>
    <property type="chains" value="1D/2D=1-276"/>
</dbReference>
<dbReference type="PDB" id="5HCP">
    <property type="method" value="X-ray"/>
    <property type="resolution" value="2.89 A"/>
    <property type="chains" value="1D/2D=1-276"/>
</dbReference>
<dbReference type="PDB" id="5HCQ">
    <property type="method" value="X-ray"/>
    <property type="resolution" value="2.80 A"/>
    <property type="chains" value="1D/2D=1-276"/>
</dbReference>
<dbReference type="PDB" id="5HCR">
    <property type="method" value="X-ray"/>
    <property type="resolution" value="2.80 A"/>
    <property type="chains" value="1D/2D=1-276"/>
</dbReference>
<dbReference type="PDB" id="5HD1">
    <property type="method" value="X-ray"/>
    <property type="resolution" value="2.70 A"/>
    <property type="chains" value="1D/2D=1-276"/>
</dbReference>
<dbReference type="PDB" id="5IB7">
    <property type="method" value="X-ray"/>
    <property type="resolution" value="2.99 A"/>
    <property type="chains" value="11/19=1-276"/>
</dbReference>
<dbReference type="PDB" id="5IB8">
    <property type="method" value="X-ray"/>
    <property type="resolution" value="3.13 A"/>
    <property type="chains" value="11/19=1-276"/>
</dbReference>
<dbReference type="PDB" id="5IBB">
    <property type="method" value="X-ray"/>
    <property type="resolution" value="2.96 A"/>
    <property type="chains" value="11/19=1-276"/>
</dbReference>
<dbReference type="PDB" id="5IMQ">
    <property type="method" value="EM"/>
    <property type="resolution" value="3.80 A"/>
    <property type="chains" value="a=1-276"/>
</dbReference>
<dbReference type="PDB" id="5IMR">
    <property type="method" value="EM"/>
    <property type="chains" value="a=1-276"/>
</dbReference>
<dbReference type="PDB" id="5J30">
    <property type="method" value="X-ray"/>
    <property type="resolution" value="3.20 A"/>
    <property type="chains" value="RD/YD=1-276"/>
</dbReference>
<dbReference type="PDB" id="5J3C">
    <property type="method" value="X-ray"/>
    <property type="resolution" value="3.04 A"/>
    <property type="chains" value="RD/YD=1-276"/>
</dbReference>
<dbReference type="PDB" id="5J4B">
    <property type="method" value="X-ray"/>
    <property type="resolution" value="2.60 A"/>
    <property type="chains" value="1D/2D=1-276"/>
</dbReference>
<dbReference type="PDB" id="5J4C">
    <property type="method" value="X-ray"/>
    <property type="resolution" value="2.80 A"/>
    <property type="chains" value="1D/2D=1-276"/>
</dbReference>
<dbReference type="PDB" id="5J8B">
    <property type="method" value="X-ray"/>
    <property type="resolution" value="2.60 A"/>
    <property type="chains" value="D=1-276"/>
</dbReference>
<dbReference type="PDB" id="5NDJ">
    <property type="method" value="X-ray"/>
    <property type="resolution" value="3.15 A"/>
    <property type="chains" value="11/19=1-276"/>
</dbReference>
<dbReference type="PDB" id="5NDK">
    <property type="method" value="X-ray"/>
    <property type="resolution" value="2.95 A"/>
    <property type="chains" value="11/19=1-276"/>
</dbReference>
<dbReference type="PDB" id="5OT7">
    <property type="method" value="EM"/>
    <property type="resolution" value="3.80 A"/>
    <property type="chains" value="g=2-276"/>
</dbReference>
<dbReference type="PDB" id="5UQ7">
    <property type="method" value="EM"/>
    <property type="resolution" value="3.50 A"/>
    <property type="chains" value="D=2-276"/>
</dbReference>
<dbReference type="PDB" id="5UQ8">
    <property type="method" value="EM"/>
    <property type="resolution" value="3.20 A"/>
    <property type="chains" value="D=2-276"/>
</dbReference>
<dbReference type="PDB" id="5VP2">
    <property type="method" value="X-ray"/>
    <property type="resolution" value="2.80 A"/>
    <property type="chains" value="1D/2D=1-276"/>
</dbReference>
<dbReference type="PDB" id="5VPO">
    <property type="method" value="X-ray"/>
    <property type="resolution" value="3.34 A"/>
    <property type="chains" value="RD/YD=1-276"/>
</dbReference>
<dbReference type="PDB" id="5VPP">
    <property type="method" value="X-ray"/>
    <property type="resolution" value="3.90 A"/>
    <property type="chains" value="RD/YD=1-276"/>
</dbReference>
<dbReference type="PDB" id="5W4K">
    <property type="method" value="X-ray"/>
    <property type="resolution" value="2.70 A"/>
    <property type="chains" value="1D/2D=1-276"/>
</dbReference>
<dbReference type="PDB" id="5WIS">
    <property type="method" value="X-ray"/>
    <property type="resolution" value="2.70 A"/>
    <property type="chains" value="1D/2D=1-276"/>
</dbReference>
<dbReference type="PDB" id="5WIT">
    <property type="method" value="X-ray"/>
    <property type="resolution" value="2.60 A"/>
    <property type="chains" value="1D/2D=1-276"/>
</dbReference>
<dbReference type="PDB" id="5ZLU">
    <property type="method" value="EM"/>
    <property type="resolution" value="3.60 A"/>
    <property type="chains" value="Z=1-276"/>
</dbReference>
<dbReference type="PDB" id="6BUW">
    <property type="method" value="X-ray"/>
    <property type="resolution" value="3.50 A"/>
    <property type="chains" value="RD/YD=1-276"/>
</dbReference>
<dbReference type="PDB" id="6BZ6">
    <property type="method" value="X-ray"/>
    <property type="resolution" value="3.18 A"/>
    <property type="chains" value="RD/YD=1-276"/>
</dbReference>
<dbReference type="PDB" id="6BZ7">
    <property type="method" value="X-ray"/>
    <property type="resolution" value="3.68 A"/>
    <property type="chains" value="RD/YD=1-276"/>
</dbReference>
<dbReference type="PDB" id="6BZ8">
    <property type="method" value="X-ray"/>
    <property type="resolution" value="3.74 A"/>
    <property type="chains" value="RD/YD=1-276"/>
</dbReference>
<dbReference type="PDB" id="6C5L">
    <property type="method" value="X-ray"/>
    <property type="resolution" value="3.20 A"/>
    <property type="chains" value="BD/DD=1-276"/>
</dbReference>
<dbReference type="PDB" id="6CAE">
    <property type="method" value="X-ray"/>
    <property type="resolution" value="2.60 A"/>
    <property type="chains" value="1D/2D=1-276"/>
</dbReference>
<dbReference type="PDB" id="6CFJ">
    <property type="method" value="X-ray"/>
    <property type="resolution" value="2.80 A"/>
    <property type="chains" value="1D/2D=1-276"/>
</dbReference>
<dbReference type="PDB" id="6CFK">
    <property type="method" value="X-ray"/>
    <property type="resolution" value="2.70 A"/>
    <property type="chains" value="1D/2D=1-276"/>
</dbReference>
<dbReference type="PDB" id="6CFL">
    <property type="method" value="X-ray"/>
    <property type="resolution" value="2.60 A"/>
    <property type="chains" value="1D/2D=1-276"/>
</dbReference>
<dbReference type="PDB" id="6CZR">
    <property type="method" value="X-ray"/>
    <property type="resolution" value="3.14 A"/>
    <property type="chains" value="1D/2D=2-276"/>
</dbReference>
<dbReference type="PDB" id="6FKR">
    <property type="method" value="X-ray"/>
    <property type="resolution" value="3.20 A"/>
    <property type="chains" value="1D/2D=2-276"/>
</dbReference>
<dbReference type="PDB" id="6GSJ">
    <property type="method" value="X-ray"/>
    <property type="resolution" value="2.96 A"/>
    <property type="chains" value="11/19=1-276"/>
</dbReference>
<dbReference type="PDB" id="6GSK">
    <property type="method" value="X-ray"/>
    <property type="resolution" value="3.36 A"/>
    <property type="chains" value="11/19=1-276"/>
</dbReference>
<dbReference type="PDB" id="6GSL">
    <property type="method" value="X-ray"/>
    <property type="resolution" value="3.16 A"/>
    <property type="chains" value="11/19=1-276"/>
</dbReference>
<dbReference type="PDB" id="6GZQ">
    <property type="method" value="EM"/>
    <property type="resolution" value="3.28 A"/>
    <property type="chains" value="C1=2-273"/>
</dbReference>
<dbReference type="PDB" id="6GZX">
    <property type="method" value="EM"/>
    <property type="resolution" value="4.57 A"/>
    <property type="chains" value="C1/C2=2-273"/>
</dbReference>
<dbReference type="PDB" id="6GZZ">
    <property type="method" value="EM"/>
    <property type="resolution" value="4.13 A"/>
    <property type="chains" value="C1/C2=2-273"/>
</dbReference>
<dbReference type="PDB" id="6N9E">
    <property type="method" value="X-ray"/>
    <property type="resolution" value="3.70 A"/>
    <property type="chains" value="1D/2D=1-276"/>
</dbReference>
<dbReference type="PDB" id="6N9F">
    <property type="method" value="X-ray"/>
    <property type="resolution" value="3.70 A"/>
    <property type="chains" value="1D/2D=1-276"/>
</dbReference>
<dbReference type="PDB" id="6ND5">
    <property type="method" value="X-ray"/>
    <property type="resolution" value="2.60 A"/>
    <property type="chains" value="1D/2D=1-276"/>
</dbReference>
<dbReference type="PDB" id="6ND6">
    <property type="method" value="X-ray"/>
    <property type="resolution" value="2.85 A"/>
    <property type="chains" value="1D/2D=1-276"/>
</dbReference>
<dbReference type="PDB" id="6NDK">
    <property type="method" value="X-ray"/>
    <property type="resolution" value="3.64 A"/>
    <property type="chains" value="RD/YD=1-276"/>
</dbReference>
<dbReference type="PDB" id="6NSH">
    <property type="method" value="X-ray"/>
    <property type="resolution" value="3.40 A"/>
    <property type="chains" value="RD/YD=1-276"/>
</dbReference>
<dbReference type="PDB" id="6NTA">
    <property type="method" value="X-ray"/>
    <property type="resolution" value="3.10 A"/>
    <property type="chains" value="RD/YD=1-276"/>
</dbReference>
<dbReference type="PDB" id="6NUO">
    <property type="method" value="X-ray"/>
    <property type="resolution" value="3.20 A"/>
    <property type="chains" value="RD/YD=1-276"/>
</dbReference>
<dbReference type="PDB" id="6NWY">
    <property type="method" value="X-ray"/>
    <property type="resolution" value="3.50 A"/>
    <property type="chains" value="RD/YD=1-276"/>
</dbReference>
<dbReference type="PDB" id="6O3M">
    <property type="method" value="X-ray"/>
    <property type="resolution" value="3.97 A"/>
    <property type="chains" value="RD/YD=1-276"/>
</dbReference>
<dbReference type="PDB" id="6O97">
    <property type="method" value="X-ray"/>
    <property type="resolution" value="2.75 A"/>
    <property type="chains" value="1D/2D=1-276"/>
</dbReference>
<dbReference type="PDB" id="6OF1">
    <property type="method" value="X-ray"/>
    <property type="resolution" value="2.80 A"/>
    <property type="chains" value="1D/2D=1-276"/>
</dbReference>
<dbReference type="PDB" id="6OF6">
    <property type="method" value="X-ray"/>
    <property type="resolution" value="3.20 A"/>
    <property type="chains" value="RD/YD=1-276"/>
</dbReference>
<dbReference type="PDB" id="6OJ2">
    <property type="method" value="X-ray"/>
    <property type="resolution" value="3.20 A"/>
    <property type="chains" value="RD/YD=1-276"/>
</dbReference>
<dbReference type="PDB" id="6OPE">
    <property type="method" value="X-ray"/>
    <property type="resolution" value="3.10 A"/>
    <property type="chains" value="RD/YD=1-276"/>
</dbReference>
<dbReference type="PDB" id="6ORD">
    <property type="method" value="X-ray"/>
    <property type="resolution" value="3.10 A"/>
    <property type="chains" value="RD/YD=1-276"/>
</dbReference>
<dbReference type="PDB" id="6OSI">
    <property type="method" value="X-ray"/>
    <property type="resolution" value="4.14 A"/>
    <property type="chains" value="RD/YD=1-276"/>
</dbReference>
<dbReference type="PDB" id="6OTR">
    <property type="method" value="X-ray"/>
    <property type="resolution" value="3.12 A"/>
    <property type="chains" value="RD/YD=1-276"/>
</dbReference>
<dbReference type="PDB" id="6OXA">
    <property type="method" value="X-ray"/>
    <property type="resolution" value="3.25 A"/>
    <property type="chains" value="RD/YD=1-276"/>
</dbReference>
<dbReference type="PDB" id="6OXI">
    <property type="method" value="X-ray"/>
    <property type="resolution" value="3.50 A"/>
    <property type="chains" value="RD/YD=1-276"/>
</dbReference>
<dbReference type="PDB" id="6Q95">
    <property type="method" value="EM"/>
    <property type="resolution" value="3.70 A"/>
    <property type="chains" value="B=2-273"/>
</dbReference>
<dbReference type="PDB" id="6QNQ">
    <property type="method" value="X-ray"/>
    <property type="resolution" value="3.50 A"/>
    <property type="chains" value="11/19=1-276"/>
</dbReference>
<dbReference type="PDB" id="6QNR">
    <property type="method" value="X-ray"/>
    <property type="resolution" value="3.10 A"/>
    <property type="chains" value="11/19=1-276"/>
</dbReference>
<dbReference type="PDB" id="6UCQ">
    <property type="method" value="X-ray"/>
    <property type="resolution" value="3.50 A"/>
    <property type="chains" value="1D/2D=1-276"/>
</dbReference>
<dbReference type="PDB" id="6UO1">
    <property type="method" value="X-ray"/>
    <property type="resolution" value="2.95 A"/>
    <property type="chains" value="1D/2D=1-276"/>
</dbReference>
<dbReference type="PDB" id="6XHV">
    <property type="method" value="X-ray"/>
    <property type="resolution" value="2.40 A"/>
    <property type="chains" value="1D/2D=1-276"/>
</dbReference>
<dbReference type="PDB" id="6XHW">
    <property type="method" value="X-ray"/>
    <property type="resolution" value="2.50 A"/>
    <property type="chains" value="1D/2D=1-276"/>
</dbReference>
<dbReference type="PDB" id="6XHX">
    <property type="method" value="X-ray"/>
    <property type="resolution" value="2.55 A"/>
    <property type="chains" value="1D/2D=1-276"/>
</dbReference>
<dbReference type="PDB" id="6XHY">
    <property type="method" value="X-ray"/>
    <property type="resolution" value="2.60 A"/>
    <property type="chains" value="1D/2D=1-276"/>
</dbReference>
<dbReference type="PDB" id="6XQD">
    <property type="method" value="X-ray"/>
    <property type="resolution" value="2.80 A"/>
    <property type="chains" value="1D/2D=1-276"/>
</dbReference>
<dbReference type="PDB" id="6XQE">
    <property type="method" value="X-ray"/>
    <property type="resolution" value="3.00 A"/>
    <property type="chains" value="1D/2D=1-276"/>
</dbReference>
<dbReference type="PDB" id="7AZO">
    <property type="method" value="X-ray"/>
    <property type="resolution" value="3.30 A"/>
    <property type="chains" value="L2A/L2B=1-276"/>
</dbReference>
<dbReference type="PDB" id="7AZS">
    <property type="method" value="X-ray"/>
    <property type="resolution" value="3.10 A"/>
    <property type="chains" value="L2A/L2B=1-276"/>
</dbReference>
<dbReference type="PDB" id="7JQL">
    <property type="method" value="X-ray"/>
    <property type="resolution" value="3.00 A"/>
    <property type="chains" value="1D/2D=1-276"/>
</dbReference>
<dbReference type="PDB" id="7JQM">
    <property type="method" value="X-ray"/>
    <property type="resolution" value="3.05 A"/>
    <property type="chains" value="1D/2D=1-276"/>
</dbReference>
<dbReference type="PDB" id="7LH5">
    <property type="method" value="X-ray"/>
    <property type="resolution" value="3.27 A"/>
    <property type="chains" value="BD/DD=1-276"/>
</dbReference>
<dbReference type="PDB" id="7MD7">
    <property type="method" value="X-ray"/>
    <property type="resolution" value="2.80 A"/>
    <property type="chains" value="1D/2D=1-276"/>
</dbReference>
<dbReference type="PDB" id="7RQ8">
    <property type="method" value="X-ray"/>
    <property type="resolution" value="2.50 A"/>
    <property type="chains" value="1D/2D=1-276"/>
</dbReference>
<dbReference type="PDB" id="7RQ9">
    <property type="method" value="X-ray"/>
    <property type="resolution" value="2.60 A"/>
    <property type="chains" value="1D/2D=1-276"/>
</dbReference>
<dbReference type="PDB" id="7RQA">
    <property type="method" value="X-ray"/>
    <property type="resolution" value="2.40 A"/>
    <property type="chains" value="1D/2D=1-276"/>
</dbReference>
<dbReference type="PDB" id="7RQB">
    <property type="method" value="X-ray"/>
    <property type="resolution" value="2.45 A"/>
    <property type="chains" value="1D/2D=1-276"/>
</dbReference>
<dbReference type="PDB" id="7RQC">
    <property type="method" value="X-ray"/>
    <property type="resolution" value="2.50 A"/>
    <property type="chains" value="1D/2D=1-276"/>
</dbReference>
<dbReference type="PDB" id="7RQD">
    <property type="method" value="X-ray"/>
    <property type="resolution" value="2.50 A"/>
    <property type="chains" value="1D/2D=1-276"/>
</dbReference>
<dbReference type="PDB" id="7RQE">
    <property type="method" value="X-ray"/>
    <property type="resolution" value="2.40 A"/>
    <property type="chains" value="1D/2D=1-276"/>
</dbReference>
<dbReference type="PDB" id="7U2H">
    <property type="method" value="X-ray"/>
    <property type="resolution" value="2.55 A"/>
    <property type="chains" value="1D/2D=1-276"/>
</dbReference>
<dbReference type="PDB" id="7U2I">
    <property type="method" value="X-ray"/>
    <property type="resolution" value="2.55 A"/>
    <property type="chains" value="1D/2D=1-276"/>
</dbReference>
<dbReference type="PDB" id="7U2J">
    <property type="method" value="X-ray"/>
    <property type="resolution" value="2.55 A"/>
    <property type="chains" value="1D/2D=1-276"/>
</dbReference>
<dbReference type="PDB" id="8CVJ">
    <property type="method" value="X-ray"/>
    <property type="resolution" value="2.40 A"/>
    <property type="chains" value="1D/2D=1-276"/>
</dbReference>
<dbReference type="PDB" id="8CVK">
    <property type="method" value="X-ray"/>
    <property type="resolution" value="2.50 A"/>
    <property type="chains" value="1D/2D=1-276"/>
</dbReference>
<dbReference type="PDB" id="8CVL">
    <property type="method" value="X-ray"/>
    <property type="resolution" value="2.30 A"/>
    <property type="chains" value="1D/2D=1-276"/>
</dbReference>
<dbReference type="PDB" id="8EKB">
    <property type="method" value="X-ray"/>
    <property type="resolution" value="2.70 A"/>
    <property type="chains" value="1D/2D=1-276"/>
</dbReference>
<dbReference type="PDB" id="8EV6">
    <property type="method" value="X-ray"/>
    <property type="resolution" value="2.95 A"/>
    <property type="chains" value="1D/2D=1-276"/>
</dbReference>
<dbReference type="PDB" id="8EV7">
    <property type="method" value="X-ray"/>
    <property type="resolution" value="2.89 A"/>
    <property type="chains" value="1D/2D=1-276"/>
</dbReference>
<dbReference type="PDB" id="8FC1">
    <property type="method" value="X-ray"/>
    <property type="resolution" value="2.50 A"/>
    <property type="chains" value="1D/2D=1-276"/>
</dbReference>
<dbReference type="PDB" id="8FC2">
    <property type="method" value="X-ray"/>
    <property type="resolution" value="2.50 A"/>
    <property type="chains" value="1D/2D=1-276"/>
</dbReference>
<dbReference type="PDB" id="8FC3">
    <property type="method" value="X-ray"/>
    <property type="resolution" value="2.60 A"/>
    <property type="chains" value="1D/2D=1-276"/>
</dbReference>
<dbReference type="PDB" id="8FC4">
    <property type="method" value="X-ray"/>
    <property type="resolution" value="2.45 A"/>
    <property type="chains" value="1D/2D=1-276"/>
</dbReference>
<dbReference type="PDB" id="8FC5">
    <property type="method" value="X-ray"/>
    <property type="resolution" value="2.65 A"/>
    <property type="chains" value="1D/2D=1-276"/>
</dbReference>
<dbReference type="PDB" id="8FC6">
    <property type="method" value="X-ray"/>
    <property type="resolution" value="2.35 A"/>
    <property type="chains" value="1D/2D=1-276"/>
</dbReference>
<dbReference type="PDB" id="8FOM">
    <property type="method" value="X-ray"/>
    <property type="resolution" value="3.58 A"/>
    <property type="chains" value="RD/YD=1-276"/>
</dbReference>
<dbReference type="PDB" id="8FON">
    <property type="method" value="X-ray"/>
    <property type="resolution" value="3.64 A"/>
    <property type="chains" value="RD/YD=1-276"/>
</dbReference>
<dbReference type="PDB" id="8G29">
    <property type="method" value="X-ray"/>
    <property type="resolution" value="2.55 A"/>
    <property type="chains" value="1D/2D=1-276"/>
</dbReference>
<dbReference type="PDB" id="8G2A">
    <property type="method" value="X-ray"/>
    <property type="resolution" value="2.45 A"/>
    <property type="chains" value="1D/2D=1-276"/>
</dbReference>
<dbReference type="PDB" id="8G2B">
    <property type="method" value="X-ray"/>
    <property type="resolution" value="2.55 A"/>
    <property type="chains" value="1D/2D=1-276"/>
</dbReference>
<dbReference type="PDB" id="8G2C">
    <property type="method" value="X-ray"/>
    <property type="resolution" value="2.65 A"/>
    <property type="chains" value="1D/2D=1-276"/>
</dbReference>
<dbReference type="PDB" id="8G2D">
    <property type="method" value="X-ray"/>
    <property type="resolution" value="2.70 A"/>
    <property type="chains" value="1D/2D=1-276"/>
</dbReference>
<dbReference type="PDB" id="8T8B">
    <property type="method" value="X-ray"/>
    <property type="resolution" value="2.65 A"/>
    <property type="chains" value="1D/2D=1-276"/>
</dbReference>
<dbReference type="PDB" id="8T8C">
    <property type="method" value="X-ray"/>
    <property type="resolution" value="2.60 A"/>
    <property type="chains" value="1D/2D=1-276"/>
</dbReference>
<dbReference type="PDB" id="8UD6">
    <property type="method" value="X-ray"/>
    <property type="resolution" value="2.70 A"/>
    <property type="chains" value="1D/2D=1-276"/>
</dbReference>
<dbReference type="PDB" id="8UD7">
    <property type="method" value="X-ray"/>
    <property type="resolution" value="2.55 A"/>
    <property type="chains" value="1D/2D=1-276"/>
</dbReference>
<dbReference type="PDB" id="8UD8">
    <property type="method" value="X-ray"/>
    <property type="resolution" value="2.60 A"/>
    <property type="chains" value="1D/2D=1-276"/>
</dbReference>
<dbReference type="PDB" id="8UVR">
    <property type="method" value="X-ray"/>
    <property type="resolution" value="2.60 A"/>
    <property type="chains" value="1D/2D=1-276"/>
</dbReference>
<dbReference type="PDB" id="8UVS">
    <property type="method" value="X-ray"/>
    <property type="resolution" value="2.75 A"/>
    <property type="chains" value="1D/2D=1-276"/>
</dbReference>
<dbReference type="PDB" id="8VTU">
    <property type="method" value="X-ray"/>
    <property type="resolution" value="2.40 A"/>
    <property type="chains" value="1D/2D=1-276"/>
</dbReference>
<dbReference type="PDB" id="8VTV">
    <property type="method" value="X-ray"/>
    <property type="resolution" value="2.55 A"/>
    <property type="chains" value="1D/2D=1-276"/>
</dbReference>
<dbReference type="PDB" id="8VTW">
    <property type="method" value="X-ray"/>
    <property type="resolution" value="2.35 A"/>
    <property type="chains" value="1D/2D=1-276"/>
</dbReference>
<dbReference type="PDB" id="8VTX">
    <property type="method" value="X-ray"/>
    <property type="resolution" value="2.40 A"/>
    <property type="chains" value="1D/2D=1-276"/>
</dbReference>
<dbReference type="PDB" id="8VTY">
    <property type="method" value="X-ray"/>
    <property type="resolution" value="2.60 A"/>
    <property type="chains" value="1D/2D=1-276"/>
</dbReference>
<dbReference type="PDB" id="8WV1">
    <property type="method" value="X-ray"/>
    <property type="resolution" value="3.99 A"/>
    <property type="chains" value="C/c=1-276"/>
</dbReference>
<dbReference type="PDB" id="9B00">
    <property type="method" value="X-ray"/>
    <property type="resolution" value="2.80 A"/>
    <property type="chains" value="1D/2D=1-276"/>
</dbReference>
<dbReference type="PDB" id="9D0J">
    <property type="method" value="X-ray"/>
    <property type="resolution" value="2.50 A"/>
    <property type="chains" value="1D/2D=1-276"/>
</dbReference>
<dbReference type="PDB" id="9D7R">
    <property type="method" value="X-ray"/>
    <property type="resolution" value="2.70 A"/>
    <property type="chains" value="1D/2D=1-276"/>
</dbReference>
<dbReference type="PDB" id="9D7S">
    <property type="method" value="X-ray"/>
    <property type="resolution" value="2.85 A"/>
    <property type="chains" value="1D/2D=1-276"/>
</dbReference>
<dbReference type="PDB" id="9D7T">
    <property type="method" value="X-ray"/>
    <property type="resolution" value="2.70 A"/>
    <property type="chains" value="1D/2D=1-276"/>
</dbReference>
<dbReference type="PDB" id="9DFC">
    <property type="method" value="X-ray"/>
    <property type="resolution" value="2.50 A"/>
    <property type="chains" value="1D/2D=1-276"/>
</dbReference>
<dbReference type="PDB" id="9DFD">
    <property type="method" value="X-ray"/>
    <property type="resolution" value="2.60 A"/>
    <property type="chains" value="1D/2D=1-276"/>
</dbReference>
<dbReference type="PDB" id="9DFE">
    <property type="method" value="X-ray"/>
    <property type="resolution" value="2.60 A"/>
    <property type="chains" value="1D/2D=1-276"/>
</dbReference>
<dbReference type="PDBsum" id="1VVJ"/>
<dbReference type="PDBsum" id="1VY4"/>
<dbReference type="PDBsum" id="1VY5"/>
<dbReference type="PDBsum" id="1VY6"/>
<dbReference type="PDBsum" id="1VY7"/>
<dbReference type="PDBsum" id="4L47"/>
<dbReference type="PDBsum" id="4L71"/>
<dbReference type="PDBsum" id="4LEL"/>
<dbReference type="PDBsum" id="4LFZ"/>
<dbReference type="PDBsum" id="4LNT"/>
<dbReference type="PDBsum" id="4LSK"/>
<dbReference type="PDBsum" id="4LT8"/>
<dbReference type="PDBsum" id="4P6F"/>
<dbReference type="PDBsum" id="4P70"/>
<dbReference type="PDBsum" id="4TUA"/>
<dbReference type="PDBsum" id="4TUB"/>
<dbReference type="PDBsum" id="4TUC"/>
<dbReference type="PDBsum" id="4TUD"/>
<dbReference type="PDBsum" id="4TUE"/>
<dbReference type="PDBsum" id="4V42"/>
<dbReference type="PDBsum" id="4V4P"/>
<dbReference type="PDBsum" id="4V4X"/>
<dbReference type="PDBsum" id="4V4Y"/>
<dbReference type="PDBsum" id="4V4Z"/>
<dbReference type="PDBsum" id="4V51"/>
<dbReference type="PDBsum" id="4V5A"/>
<dbReference type="PDBsum" id="4V5C"/>
<dbReference type="PDBsum" id="4V5D"/>
<dbReference type="PDBsum" id="4V5E"/>
<dbReference type="PDBsum" id="4V5F"/>
<dbReference type="PDBsum" id="4V5G"/>
<dbReference type="PDBsum" id="4V5J"/>
<dbReference type="PDBsum" id="4V5K"/>
<dbReference type="PDBsum" id="4V5L"/>
<dbReference type="PDBsum" id="4V5M"/>
<dbReference type="PDBsum" id="4V5N"/>
<dbReference type="PDBsum" id="4V5P"/>
<dbReference type="PDBsum" id="4V5Q"/>
<dbReference type="PDBsum" id="4V5R"/>
<dbReference type="PDBsum" id="4V5S"/>
<dbReference type="PDBsum" id="4V68"/>
<dbReference type="PDBsum" id="4V6A"/>
<dbReference type="PDBsum" id="4V6F"/>
<dbReference type="PDBsum" id="4V6G"/>
<dbReference type="PDBsum" id="4V7J"/>
<dbReference type="PDBsum" id="4V7K"/>
<dbReference type="PDBsum" id="4V7L"/>
<dbReference type="PDBsum" id="4V7M"/>
<dbReference type="PDBsum" id="4V7W"/>
<dbReference type="PDBsum" id="4V7X"/>
<dbReference type="PDBsum" id="4V7Y"/>
<dbReference type="PDBsum" id="4V7Z"/>
<dbReference type="PDBsum" id="4V87"/>
<dbReference type="PDBsum" id="4V8A"/>
<dbReference type="PDBsum" id="4V8B"/>
<dbReference type="PDBsum" id="4V8C"/>
<dbReference type="PDBsum" id="4V8D"/>
<dbReference type="PDBsum" id="4V8E"/>
<dbReference type="PDBsum" id="4V8F"/>
<dbReference type="PDBsum" id="4V8G"/>
<dbReference type="PDBsum" id="4V8H"/>
<dbReference type="PDBsum" id="4V8I"/>
<dbReference type="PDBsum" id="4V8J"/>
<dbReference type="PDBsum" id="4V8N"/>
<dbReference type="PDBsum" id="4V8O"/>
<dbReference type="PDBsum" id="4V8Q"/>
<dbReference type="PDBsum" id="4V8U"/>
<dbReference type="PDBsum" id="4V8X"/>
<dbReference type="PDBsum" id="4V90"/>
<dbReference type="PDBsum" id="4V95"/>
<dbReference type="PDBsum" id="4V97"/>
<dbReference type="PDBsum" id="4V9A"/>
<dbReference type="PDBsum" id="4V9B"/>
<dbReference type="PDBsum" id="4V9H"/>
<dbReference type="PDBsum" id="4V9I"/>
<dbReference type="PDBsum" id="4V9R"/>
<dbReference type="PDBsum" id="4V9S"/>
<dbReference type="PDBsum" id="4W2E"/>
<dbReference type="PDBsum" id="4W2F"/>
<dbReference type="PDBsum" id="4W2G"/>
<dbReference type="PDBsum" id="4W2H"/>
<dbReference type="PDBsum" id="4W2I"/>
<dbReference type="PDBsum" id="4W4G"/>
<dbReference type="PDBsum" id="4WPO"/>
<dbReference type="PDBsum" id="4WQ1"/>
<dbReference type="PDBsum" id="4WQF"/>
<dbReference type="PDBsum" id="4WQR"/>
<dbReference type="PDBsum" id="4WQU"/>
<dbReference type="PDBsum" id="4WQY"/>
<dbReference type="PDBsum" id="4WR6"/>
<dbReference type="PDBsum" id="4WRA"/>
<dbReference type="PDBsum" id="4WRO"/>
<dbReference type="PDBsum" id="4WSD"/>
<dbReference type="PDBsum" id="4WSM"/>
<dbReference type="PDBsum" id="4WT1"/>
<dbReference type="PDBsum" id="4WT8"/>
<dbReference type="PDBsum" id="4WU1"/>
<dbReference type="PDBsum" id="4WZD"/>
<dbReference type="PDBsum" id="4WZO"/>
<dbReference type="PDBsum" id="4Y4O"/>
<dbReference type="PDBsum" id="4Y4P"/>
<dbReference type="PDBsum" id="4YPB"/>
<dbReference type="PDBsum" id="4YZV"/>
<dbReference type="PDBsum" id="4Z3S"/>
<dbReference type="PDBsum" id="4Z8C"/>
<dbReference type="PDBsum" id="4ZER"/>
<dbReference type="PDBsum" id="4ZSN"/>
<dbReference type="PDBsum" id="5A9Z"/>
<dbReference type="PDBsum" id="5AA0"/>
<dbReference type="PDBsum" id="5CZP"/>
<dbReference type="PDBsum" id="5D8B"/>
<dbReference type="PDBsum" id="5DFE"/>
<dbReference type="PDBsum" id="5DOX"/>
<dbReference type="PDBsum" id="5DOY"/>
<dbReference type="PDBsum" id="5E7K"/>
<dbReference type="PDBsum" id="5E81"/>
<dbReference type="PDBsum" id="5EL4"/>
<dbReference type="PDBsum" id="5EL5"/>
<dbReference type="PDBsum" id="5EL6"/>
<dbReference type="PDBsum" id="5EL7"/>
<dbReference type="PDBsum" id="5F8K"/>
<dbReference type="PDBsum" id="5FDU"/>
<dbReference type="PDBsum" id="5FDV"/>
<dbReference type="PDBsum" id="5HAU"/>
<dbReference type="PDBsum" id="5HCP"/>
<dbReference type="PDBsum" id="5HCQ"/>
<dbReference type="PDBsum" id="5HCR"/>
<dbReference type="PDBsum" id="5HD1"/>
<dbReference type="PDBsum" id="5IB7"/>
<dbReference type="PDBsum" id="5IB8"/>
<dbReference type="PDBsum" id="5IBB"/>
<dbReference type="PDBsum" id="5IMQ"/>
<dbReference type="PDBsum" id="5IMR"/>
<dbReference type="PDBsum" id="5J30"/>
<dbReference type="PDBsum" id="5J3C"/>
<dbReference type="PDBsum" id="5J4B"/>
<dbReference type="PDBsum" id="5J4C"/>
<dbReference type="PDBsum" id="5J8B"/>
<dbReference type="PDBsum" id="5NDJ"/>
<dbReference type="PDBsum" id="5NDK"/>
<dbReference type="PDBsum" id="5OT7"/>
<dbReference type="PDBsum" id="5UQ7"/>
<dbReference type="PDBsum" id="5UQ8"/>
<dbReference type="PDBsum" id="5VP2"/>
<dbReference type="PDBsum" id="5VPO"/>
<dbReference type="PDBsum" id="5VPP"/>
<dbReference type="PDBsum" id="5W4K"/>
<dbReference type="PDBsum" id="5WIS"/>
<dbReference type="PDBsum" id="5WIT"/>
<dbReference type="PDBsum" id="5ZLU"/>
<dbReference type="PDBsum" id="6BUW"/>
<dbReference type="PDBsum" id="6BZ6"/>
<dbReference type="PDBsum" id="6BZ7"/>
<dbReference type="PDBsum" id="6BZ8"/>
<dbReference type="PDBsum" id="6C5L"/>
<dbReference type="PDBsum" id="6CAE"/>
<dbReference type="PDBsum" id="6CFJ"/>
<dbReference type="PDBsum" id="6CFK"/>
<dbReference type="PDBsum" id="6CFL"/>
<dbReference type="PDBsum" id="6CZR"/>
<dbReference type="PDBsum" id="6FKR"/>
<dbReference type="PDBsum" id="6GSJ"/>
<dbReference type="PDBsum" id="6GSK"/>
<dbReference type="PDBsum" id="6GSL"/>
<dbReference type="PDBsum" id="6GZQ"/>
<dbReference type="PDBsum" id="6GZX"/>
<dbReference type="PDBsum" id="6GZZ"/>
<dbReference type="PDBsum" id="6N9E"/>
<dbReference type="PDBsum" id="6N9F"/>
<dbReference type="PDBsum" id="6ND5"/>
<dbReference type="PDBsum" id="6ND6"/>
<dbReference type="PDBsum" id="6NDK"/>
<dbReference type="PDBsum" id="6NSH"/>
<dbReference type="PDBsum" id="6NTA"/>
<dbReference type="PDBsum" id="6NUO"/>
<dbReference type="PDBsum" id="6NWY"/>
<dbReference type="PDBsum" id="6O3M"/>
<dbReference type="PDBsum" id="6O97"/>
<dbReference type="PDBsum" id="6OF1"/>
<dbReference type="PDBsum" id="6OF6"/>
<dbReference type="PDBsum" id="6OJ2"/>
<dbReference type="PDBsum" id="6OPE"/>
<dbReference type="PDBsum" id="6ORD"/>
<dbReference type="PDBsum" id="6OSI"/>
<dbReference type="PDBsum" id="6OTR"/>
<dbReference type="PDBsum" id="6OXA"/>
<dbReference type="PDBsum" id="6OXI"/>
<dbReference type="PDBsum" id="6Q95"/>
<dbReference type="PDBsum" id="6QNQ"/>
<dbReference type="PDBsum" id="6QNR"/>
<dbReference type="PDBsum" id="6UCQ"/>
<dbReference type="PDBsum" id="6UO1"/>
<dbReference type="PDBsum" id="6XHV"/>
<dbReference type="PDBsum" id="6XHW"/>
<dbReference type="PDBsum" id="6XHX"/>
<dbReference type="PDBsum" id="6XHY"/>
<dbReference type="PDBsum" id="6XQD"/>
<dbReference type="PDBsum" id="6XQE"/>
<dbReference type="PDBsum" id="7AZO"/>
<dbReference type="PDBsum" id="7AZS"/>
<dbReference type="PDBsum" id="7JQL"/>
<dbReference type="PDBsum" id="7JQM"/>
<dbReference type="PDBsum" id="7LH5"/>
<dbReference type="PDBsum" id="7MD7"/>
<dbReference type="PDBsum" id="7RQ8"/>
<dbReference type="PDBsum" id="7RQ9"/>
<dbReference type="PDBsum" id="7RQA"/>
<dbReference type="PDBsum" id="7RQB"/>
<dbReference type="PDBsum" id="7RQC"/>
<dbReference type="PDBsum" id="7RQD"/>
<dbReference type="PDBsum" id="7RQE"/>
<dbReference type="PDBsum" id="7U2H"/>
<dbReference type="PDBsum" id="7U2I"/>
<dbReference type="PDBsum" id="7U2J"/>
<dbReference type="PDBsum" id="8CVJ"/>
<dbReference type="PDBsum" id="8CVK"/>
<dbReference type="PDBsum" id="8CVL"/>
<dbReference type="PDBsum" id="8EKB"/>
<dbReference type="PDBsum" id="8EV6"/>
<dbReference type="PDBsum" id="8EV7"/>
<dbReference type="PDBsum" id="8FC1"/>
<dbReference type="PDBsum" id="8FC2"/>
<dbReference type="PDBsum" id="8FC3"/>
<dbReference type="PDBsum" id="8FC4"/>
<dbReference type="PDBsum" id="8FC5"/>
<dbReference type="PDBsum" id="8FC6"/>
<dbReference type="PDBsum" id="8FOM"/>
<dbReference type="PDBsum" id="8FON"/>
<dbReference type="PDBsum" id="8G29"/>
<dbReference type="PDBsum" id="8G2A"/>
<dbReference type="PDBsum" id="8G2B"/>
<dbReference type="PDBsum" id="8G2C"/>
<dbReference type="PDBsum" id="8G2D"/>
<dbReference type="PDBsum" id="8T8B"/>
<dbReference type="PDBsum" id="8T8C"/>
<dbReference type="PDBsum" id="8UD6"/>
<dbReference type="PDBsum" id="8UD7"/>
<dbReference type="PDBsum" id="8UD8"/>
<dbReference type="PDBsum" id="8UVR"/>
<dbReference type="PDBsum" id="8UVS"/>
<dbReference type="PDBsum" id="8VTU"/>
<dbReference type="PDBsum" id="8VTV"/>
<dbReference type="PDBsum" id="8VTW"/>
<dbReference type="PDBsum" id="8VTX"/>
<dbReference type="PDBsum" id="8VTY"/>
<dbReference type="PDBsum" id="8WV1"/>
<dbReference type="PDBsum" id="9B00"/>
<dbReference type="PDBsum" id="9D0J"/>
<dbReference type="PDBsum" id="9D7R"/>
<dbReference type="PDBsum" id="9D7S"/>
<dbReference type="PDBsum" id="9D7T"/>
<dbReference type="PDBsum" id="9DFC"/>
<dbReference type="PDBsum" id="9DFD"/>
<dbReference type="PDBsum" id="9DFE"/>
<dbReference type="EMDB" id="EMD-0101"/>
<dbReference type="EMDB" id="EMD-0104"/>
<dbReference type="EMDB" id="EMD-0105"/>
<dbReference type="EMDB" id="EMD-3852"/>
<dbReference type="EMDB" id="EMD-4475"/>
<dbReference type="EMDB" id="EMD-6934"/>
<dbReference type="EMDB" id="EMD-8596"/>
<dbReference type="EMDB" id="EMD-8597"/>
<dbReference type="SMR" id="P60405"/>
<dbReference type="IntAct" id="P60405">
    <property type="interactions" value="8"/>
</dbReference>
<dbReference type="EnsemblBacteria" id="BAD71512">
    <property type="protein sequence ID" value="BAD71512"/>
    <property type="gene ID" value="BAD71512"/>
</dbReference>
<dbReference type="GeneID" id="3168720"/>
<dbReference type="KEGG" id="ttj:TTHA1689"/>
<dbReference type="PATRIC" id="fig|300852.9.peg.1659"/>
<dbReference type="eggNOG" id="COG0090">
    <property type="taxonomic scope" value="Bacteria"/>
</dbReference>
<dbReference type="HOGENOM" id="CLU_036235_2_1_0"/>
<dbReference type="PhylomeDB" id="P60405"/>
<dbReference type="Proteomes" id="UP000000532">
    <property type="component" value="Chromosome"/>
</dbReference>
<dbReference type="GO" id="GO:0015934">
    <property type="term" value="C:large ribosomal subunit"/>
    <property type="evidence" value="ECO:0007669"/>
    <property type="project" value="InterPro"/>
</dbReference>
<dbReference type="GO" id="GO:0019843">
    <property type="term" value="F:rRNA binding"/>
    <property type="evidence" value="ECO:0007669"/>
    <property type="project" value="UniProtKB-UniRule"/>
</dbReference>
<dbReference type="GO" id="GO:0003735">
    <property type="term" value="F:structural constituent of ribosome"/>
    <property type="evidence" value="ECO:0007669"/>
    <property type="project" value="InterPro"/>
</dbReference>
<dbReference type="GO" id="GO:0016740">
    <property type="term" value="F:transferase activity"/>
    <property type="evidence" value="ECO:0007669"/>
    <property type="project" value="InterPro"/>
</dbReference>
<dbReference type="GO" id="GO:0002181">
    <property type="term" value="P:cytoplasmic translation"/>
    <property type="evidence" value="ECO:0007669"/>
    <property type="project" value="TreeGrafter"/>
</dbReference>
<dbReference type="FunFam" id="2.30.30.30:FF:000001">
    <property type="entry name" value="50S ribosomal protein L2"/>
    <property type="match status" value="1"/>
</dbReference>
<dbReference type="FunFam" id="2.40.50.140:FF:000003">
    <property type="entry name" value="50S ribosomal protein L2"/>
    <property type="match status" value="1"/>
</dbReference>
<dbReference type="FunFam" id="4.10.950.10:FF:000001">
    <property type="entry name" value="50S ribosomal protein L2"/>
    <property type="match status" value="1"/>
</dbReference>
<dbReference type="Gene3D" id="2.30.30.30">
    <property type="match status" value="1"/>
</dbReference>
<dbReference type="Gene3D" id="2.40.50.140">
    <property type="entry name" value="Nucleic acid-binding proteins"/>
    <property type="match status" value="1"/>
</dbReference>
<dbReference type="Gene3D" id="4.10.950.10">
    <property type="entry name" value="Ribosomal protein L2, domain 3"/>
    <property type="match status" value="1"/>
</dbReference>
<dbReference type="HAMAP" id="MF_01320_B">
    <property type="entry name" value="Ribosomal_uL2_B"/>
    <property type="match status" value="1"/>
</dbReference>
<dbReference type="InterPro" id="IPR012340">
    <property type="entry name" value="NA-bd_OB-fold"/>
</dbReference>
<dbReference type="InterPro" id="IPR014722">
    <property type="entry name" value="Rib_uL2_dom2"/>
</dbReference>
<dbReference type="InterPro" id="IPR002171">
    <property type="entry name" value="Ribosomal_uL2"/>
</dbReference>
<dbReference type="InterPro" id="IPR005880">
    <property type="entry name" value="Ribosomal_uL2_bac/org-type"/>
</dbReference>
<dbReference type="InterPro" id="IPR022669">
    <property type="entry name" value="Ribosomal_uL2_C"/>
</dbReference>
<dbReference type="InterPro" id="IPR022671">
    <property type="entry name" value="Ribosomal_uL2_CS"/>
</dbReference>
<dbReference type="InterPro" id="IPR014726">
    <property type="entry name" value="Ribosomal_uL2_dom3"/>
</dbReference>
<dbReference type="InterPro" id="IPR022666">
    <property type="entry name" value="Ribosomal_uL2_RNA-bd_dom"/>
</dbReference>
<dbReference type="InterPro" id="IPR008991">
    <property type="entry name" value="Translation_prot_SH3-like_sf"/>
</dbReference>
<dbReference type="NCBIfam" id="TIGR01171">
    <property type="entry name" value="rplB_bact"/>
    <property type="match status" value="1"/>
</dbReference>
<dbReference type="PANTHER" id="PTHR13691:SF5">
    <property type="entry name" value="LARGE RIBOSOMAL SUBUNIT PROTEIN UL2M"/>
    <property type="match status" value="1"/>
</dbReference>
<dbReference type="PANTHER" id="PTHR13691">
    <property type="entry name" value="RIBOSOMAL PROTEIN L2"/>
    <property type="match status" value="1"/>
</dbReference>
<dbReference type="Pfam" id="PF00181">
    <property type="entry name" value="Ribosomal_L2"/>
    <property type="match status" value="1"/>
</dbReference>
<dbReference type="Pfam" id="PF03947">
    <property type="entry name" value="Ribosomal_L2_C"/>
    <property type="match status" value="1"/>
</dbReference>
<dbReference type="PIRSF" id="PIRSF002158">
    <property type="entry name" value="Ribosomal_L2"/>
    <property type="match status" value="1"/>
</dbReference>
<dbReference type="SMART" id="SM01383">
    <property type="entry name" value="Ribosomal_L2"/>
    <property type="match status" value="1"/>
</dbReference>
<dbReference type="SMART" id="SM01382">
    <property type="entry name" value="Ribosomal_L2_C"/>
    <property type="match status" value="1"/>
</dbReference>
<dbReference type="SUPFAM" id="SSF50249">
    <property type="entry name" value="Nucleic acid-binding proteins"/>
    <property type="match status" value="1"/>
</dbReference>
<dbReference type="SUPFAM" id="SSF50104">
    <property type="entry name" value="Translation proteins SH3-like domain"/>
    <property type="match status" value="1"/>
</dbReference>
<dbReference type="PROSITE" id="PS00467">
    <property type="entry name" value="RIBOSOMAL_L2"/>
    <property type="match status" value="1"/>
</dbReference>
<feature type="initiator methionine" description="Removed" evidence="3">
    <location>
        <position position="1"/>
    </location>
</feature>
<feature type="chain" id="PRO_0000129641" description="Large ribosomal subunit protein uL2">
    <location>
        <begin position="2"/>
        <end position="276"/>
    </location>
</feature>
<feature type="region of interest" description="Disordered" evidence="2">
    <location>
        <begin position="223"/>
        <end position="276"/>
    </location>
</feature>
<feature type="compositionally biased region" description="Basic and acidic residues" evidence="2">
    <location>
        <begin position="230"/>
        <end position="240"/>
    </location>
</feature>
<feature type="compositionally biased region" description="Basic residues" evidence="2">
    <location>
        <begin position="257"/>
        <end position="276"/>
    </location>
</feature>
<feature type="turn" evidence="6">
    <location>
        <begin position="11"/>
        <end position="15"/>
    </location>
</feature>
<feature type="turn" evidence="6">
    <location>
        <begin position="22"/>
        <end position="24"/>
    </location>
</feature>
<feature type="strand" evidence="6">
    <location>
        <begin position="32"/>
        <end position="35"/>
    </location>
</feature>
<feature type="strand" evidence="6">
    <location>
        <begin position="43"/>
        <end position="51"/>
    </location>
</feature>
<feature type="helix" evidence="6">
    <location>
        <begin position="69"/>
        <end position="72"/>
    </location>
</feature>
<feature type="strand" evidence="6">
    <location>
        <begin position="77"/>
        <end position="83"/>
    </location>
</feature>
<feature type="strand" evidence="6">
    <location>
        <begin position="88"/>
        <end position="90"/>
    </location>
</feature>
<feature type="strand" evidence="6">
    <location>
        <begin position="92"/>
        <end position="97"/>
    </location>
</feature>
<feature type="strand" evidence="6">
    <location>
        <begin position="102"/>
        <end position="106"/>
    </location>
</feature>
<feature type="strand" evidence="6">
    <location>
        <begin position="130"/>
        <end position="132"/>
    </location>
</feature>
<feature type="helix" evidence="6">
    <location>
        <begin position="133"/>
        <end position="135"/>
    </location>
</feature>
<feature type="strand" evidence="6">
    <location>
        <begin position="141"/>
        <end position="145"/>
    </location>
</feature>
<feature type="strand" evidence="6">
    <location>
        <begin position="153"/>
        <end position="156"/>
    </location>
</feature>
<feature type="strand" evidence="6">
    <location>
        <begin position="163"/>
        <end position="169"/>
    </location>
</feature>
<feature type="strand" evidence="6">
    <location>
        <begin position="172"/>
        <end position="176"/>
    </location>
</feature>
<feature type="strand" evidence="6">
    <location>
        <begin position="182"/>
        <end position="186"/>
    </location>
</feature>
<feature type="strand" evidence="6">
    <location>
        <begin position="189"/>
        <end position="194"/>
    </location>
</feature>
<feature type="helix" evidence="6">
    <location>
        <begin position="199"/>
        <end position="203"/>
    </location>
</feature>
<feature type="turn" evidence="6">
    <location>
        <begin position="209"/>
        <end position="216"/>
    </location>
</feature>
<feature type="turn" evidence="6">
    <location>
        <begin position="228"/>
        <end position="230"/>
    </location>
</feature>
<feature type="strand" evidence="6">
    <location>
        <begin position="243"/>
        <end position="245"/>
    </location>
</feature>
<feature type="turn" evidence="6">
    <location>
        <begin position="265"/>
        <end position="268"/>
    </location>
</feature>
<organism>
    <name type="scientific">Thermus thermophilus (strain ATCC 27634 / DSM 579 / HB8)</name>
    <dbReference type="NCBI Taxonomy" id="300852"/>
    <lineage>
        <taxon>Bacteria</taxon>
        <taxon>Thermotogati</taxon>
        <taxon>Deinococcota</taxon>
        <taxon>Deinococci</taxon>
        <taxon>Thermales</taxon>
        <taxon>Thermaceae</taxon>
        <taxon>Thermus</taxon>
    </lineage>
</organism>
<reference key="1">
    <citation type="submission" date="2004-11" db="EMBL/GenBank/DDBJ databases">
        <title>Complete genome sequence of Thermus thermophilus HB8.</title>
        <authorList>
            <person name="Masui R."/>
            <person name="Kurokawa K."/>
            <person name="Nakagawa N."/>
            <person name="Tokunaga F."/>
            <person name="Koyama Y."/>
            <person name="Shibata T."/>
            <person name="Oshima T."/>
            <person name="Yokoyama S."/>
            <person name="Yasunaga T."/>
            <person name="Kuramitsu S."/>
        </authorList>
    </citation>
    <scope>NUCLEOTIDE SEQUENCE [LARGE SCALE GENOMIC DNA]</scope>
    <source>
        <strain>ATCC 27634 / DSM 579 / HB8</strain>
    </source>
</reference>
<reference key="2">
    <citation type="journal article" date="2000" name="Biol. Chem.">
        <title>Identification of the 50S ribosomal proteins from the eubacterium Thermus thermophilus.</title>
        <authorList>
            <person name="Katsani K.R."/>
            <person name="Tsiboli P."/>
            <person name="Anagnostopoulos K."/>
            <person name="Urlaub H."/>
            <person name="Choli-Papadopoulou T."/>
        </authorList>
    </citation>
    <scope>PROTEIN SEQUENCE OF 2-22</scope>
    <source>
        <strain>ATCC 27634 / DSM 579 / HB8</strain>
    </source>
</reference>
<reference key="3">
    <citation type="journal article" date="2005" name="Proteomics">
        <title>Extending ribosomal protein identifications to unsequenced bacterial strains using matrix-assisted laser desorption/ionization mass spectrometry.</title>
        <authorList>
            <person name="Suh M.-J."/>
            <person name="Hamburg D.M."/>
            <person name="Gregory S.T."/>
            <person name="Dahlberg A.E."/>
            <person name="Limbach P.A."/>
        </authorList>
    </citation>
    <scope>MASS SPECTROMETRY</scope>
    <source>
        <strain>ATCC 27634 / DSM 579 / HB8</strain>
    </source>
</reference>
<reference key="4">
    <citation type="journal article" date="2001" name="Cell">
        <title>The path of messenger RNA through the ribosome.</title>
        <authorList>
            <person name="Yusupova G.Z."/>
            <person name="Yusupov M.M."/>
            <person name="Cate J.H.D."/>
            <person name="Noller H.F."/>
        </authorList>
    </citation>
    <scope>X-RAY CRYSTALLOGRAPHY (5.0 ANGSTROMS) OF THE RIBOSOME</scope>
</reference>
<reference key="5">
    <citation type="journal article" date="2001" name="Science">
        <title>Crystal structure of the ribosome at 5.5 A resolution.</title>
        <authorList>
            <person name="Yusupov M.M."/>
            <person name="Yusupova G.Z."/>
            <person name="Baucom A."/>
            <person name="Lieberman K."/>
            <person name="Earnest T.N."/>
            <person name="Cate J.H.D."/>
            <person name="Noller H.F."/>
        </authorList>
    </citation>
    <scope>X-RAY CRYSTALLOGRAPHY (5.5 ANGSTROMS) OF THE RIBOSOME</scope>
    <scope>INTERSUBUNIT BRIDGE FORMATION</scope>
</reference>
<reference key="6">
    <citation type="journal article" date="2008" name="Science">
        <title>Insights into translational termination from the structure of RF2 bound to the ribosome.</title>
        <authorList>
            <person name="Weixlbaumer A."/>
            <person name="Jin H."/>
            <person name="Neubauer C."/>
            <person name="Voorhees R.M."/>
            <person name="Petry S."/>
            <person name="Kelley A.C."/>
            <person name="Ramakrishnan V."/>
        </authorList>
    </citation>
    <scope>X-RAY CRYSTALLOGRAPHY (3.45 ANGSTROMS) OF 70S RIBOSOME IN COMPLEX WITH RF2</scope>
    <scope>SUBUNIT</scope>
</reference>
<reference key="7">
    <citation type="journal article" date="2010" name="Proc. Natl. Acad. Sci. U.S.A.">
        <title>Structure of the 70S ribosome bound to release factor 2 and a substrate analog provides insights into catalysis of peptide release.</title>
        <authorList>
            <person name="Jin H."/>
            <person name="Kelley A.C."/>
            <person name="Loakes D."/>
            <person name="Ramakrishnan V."/>
        </authorList>
    </citation>
    <scope>X-RAY CRYSTALLOGRAPHY (3.10 ANGSTROMS) OF 70S RIBOSOME IN COMPLEX WITH RF2</scope>
    <scope>SUBUNIT</scope>
</reference>
<keyword id="KW-0002">3D-structure</keyword>
<keyword id="KW-0903">Direct protein sequencing</keyword>
<keyword id="KW-1185">Reference proteome</keyword>
<keyword id="KW-0687">Ribonucleoprotein</keyword>
<keyword id="KW-0689">Ribosomal protein</keyword>
<keyword id="KW-0694">RNA-binding</keyword>
<keyword id="KW-0699">rRNA-binding</keyword>
<accession>P60405</accession>
<accession>Q5SHP1</accession>
<name>RL2_THET8</name>